<feature type="chain" id="PRO_1000046445" description="Phosphoribosylformylglycinamidine cyclo-ligase">
    <location>
        <begin position="1"/>
        <end position="354"/>
    </location>
</feature>
<sequence>MSEQKPSLTYRDAGVDIDAGNDLVNRIKSTAARTRRPEVLGGLGGFGAMVSIPAGYKEPVLVSGTDGVGTKLRLAMQLQKHDSIGIDLVAMCVNDLVVGGAEPLFFLDYYATGKLNVDVAAQVVEGIGQGCEQAGCALVGGETAEMPGMYEGDDYDLAGFCVGIVERDKIIDGSRAQPGDSLLALGSSGPHSNGYSLIRKIIEVSGADLSQSMGDTTLADALMAPTRIYVKNLLKLIREVDVRALSHITGGGLPENIPRVLPKGTIAALDTQSWELPPVFQWLQNAGGVAQEEMYRTFNCGIGMVICVPEDQKALAMDTLNAMGEKVWQIGVMEAAESSDAEPVVRYAPGLLTA</sequence>
<protein>
    <recommendedName>
        <fullName evidence="1">Phosphoribosylformylglycinamidine cyclo-ligase</fullName>
        <ecNumber evidence="1">6.3.3.1</ecNumber>
    </recommendedName>
    <alternativeName>
        <fullName evidence="1">AIR synthase</fullName>
    </alternativeName>
    <alternativeName>
        <fullName evidence="1">AIRS</fullName>
    </alternativeName>
    <alternativeName>
        <fullName evidence="1">Phosphoribosyl-aminoimidazole synthetase</fullName>
    </alternativeName>
</protein>
<keyword id="KW-0067">ATP-binding</keyword>
<keyword id="KW-0963">Cytoplasm</keyword>
<keyword id="KW-0436">Ligase</keyword>
<keyword id="KW-0547">Nucleotide-binding</keyword>
<keyword id="KW-0658">Purine biosynthesis</keyword>
<proteinExistence type="inferred from homology"/>
<comment type="catalytic activity">
    <reaction evidence="1">
        <text>2-formamido-N(1)-(5-O-phospho-beta-D-ribosyl)acetamidine + ATP = 5-amino-1-(5-phospho-beta-D-ribosyl)imidazole + ADP + phosphate + H(+)</text>
        <dbReference type="Rhea" id="RHEA:23032"/>
        <dbReference type="ChEBI" id="CHEBI:15378"/>
        <dbReference type="ChEBI" id="CHEBI:30616"/>
        <dbReference type="ChEBI" id="CHEBI:43474"/>
        <dbReference type="ChEBI" id="CHEBI:137981"/>
        <dbReference type="ChEBI" id="CHEBI:147287"/>
        <dbReference type="ChEBI" id="CHEBI:456216"/>
        <dbReference type="EC" id="6.3.3.1"/>
    </reaction>
</comment>
<comment type="pathway">
    <text evidence="1">Purine metabolism; IMP biosynthesis via de novo pathway; 5-amino-1-(5-phospho-D-ribosyl)imidazole from N(2)-formyl-N(1)-(5-phospho-D-ribosyl)glycinamide: step 2/2.</text>
</comment>
<comment type="subcellular location">
    <subcellularLocation>
        <location evidence="1">Cytoplasm</location>
    </subcellularLocation>
</comment>
<comment type="similarity">
    <text evidence="1">Belongs to the AIR synthase family.</text>
</comment>
<name>PUR5_MARN8</name>
<organism>
    <name type="scientific">Marinobacter nauticus (strain ATCC 700491 / DSM 11845 / VT8)</name>
    <name type="common">Marinobacter aquaeolei</name>
    <dbReference type="NCBI Taxonomy" id="351348"/>
    <lineage>
        <taxon>Bacteria</taxon>
        <taxon>Pseudomonadati</taxon>
        <taxon>Pseudomonadota</taxon>
        <taxon>Gammaproteobacteria</taxon>
        <taxon>Pseudomonadales</taxon>
        <taxon>Marinobacteraceae</taxon>
        <taxon>Marinobacter</taxon>
    </lineage>
</organism>
<reference key="1">
    <citation type="journal article" date="2011" name="Appl. Environ. Microbiol.">
        <title>Genomic potential of Marinobacter aquaeolei, a biogeochemical 'opportunitroph'.</title>
        <authorList>
            <person name="Singer E."/>
            <person name="Webb E.A."/>
            <person name="Nelson W.C."/>
            <person name="Heidelberg J.F."/>
            <person name="Ivanova N."/>
            <person name="Pati A."/>
            <person name="Edwards K.J."/>
        </authorList>
    </citation>
    <scope>NUCLEOTIDE SEQUENCE [LARGE SCALE GENOMIC DNA]</scope>
    <source>
        <strain>ATCC 700491 / DSM 11845 / VT8</strain>
    </source>
</reference>
<evidence type="ECO:0000255" key="1">
    <source>
        <dbReference type="HAMAP-Rule" id="MF_00741"/>
    </source>
</evidence>
<accession>A1TZ73</accession>
<dbReference type="EC" id="6.3.3.1" evidence="1"/>
<dbReference type="EMBL" id="CP000514">
    <property type="protein sequence ID" value="ABM18042.1"/>
    <property type="molecule type" value="Genomic_DNA"/>
</dbReference>
<dbReference type="RefSeq" id="WP_011784462.1">
    <property type="nucleotide sequence ID" value="NC_008740.1"/>
</dbReference>
<dbReference type="SMR" id="A1TZ73"/>
<dbReference type="STRING" id="351348.Maqu_0946"/>
<dbReference type="KEGG" id="maq:Maqu_0946"/>
<dbReference type="eggNOG" id="COG0150">
    <property type="taxonomic scope" value="Bacteria"/>
</dbReference>
<dbReference type="HOGENOM" id="CLU_047116_0_0_6"/>
<dbReference type="OrthoDB" id="9777881at2"/>
<dbReference type="UniPathway" id="UPA00074">
    <property type="reaction ID" value="UER00129"/>
</dbReference>
<dbReference type="Proteomes" id="UP000000998">
    <property type="component" value="Chromosome"/>
</dbReference>
<dbReference type="GO" id="GO:0005829">
    <property type="term" value="C:cytosol"/>
    <property type="evidence" value="ECO:0007669"/>
    <property type="project" value="TreeGrafter"/>
</dbReference>
<dbReference type="GO" id="GO:0005524">
    <property type="term" value="F:ATP binding"/>
    <property type="evidence" value="ECO:0007669"/>
    <property type="project" value="UniProtKB-KW"/>
</dbReference>
<dbReference type="GO" id="GO:0004637">
    <property type="term" value="F:phosphoribosylamine-glycine ligase activity"/>
    <property type="evidence" value="ECO:0007669"/>
    <property type="project" value="TreeGrafter"/>
</dbReference>
<dbReference type="GO" id="GO:0004641">
    <property type="term" value="F:phosphoribosylformylglycinamidine cyclo-ligase activity"/>
    <property type="evidence" value="ECO:0007669"/>
    <property type="project" value="UniProtKB-UniRule"/>
</dbReference>
<dbReference type="GO" id="GO:0006189">
    <property type="term" value="P:'de novo' IMP biosynthetic process"/>
    <property type="evidence" value="ECO:0007669"/>
    <property type="project" value="UniProtKB-UniRule"/>
</dbReference>
<dbReference type="GO" id="GO:0046084">
    <property type="term" value="P:adenine biosynthetic process"/>
    <property type="evidence" value="ECO:0007669"/>
    <property type="project" value="TreeGrafter"/>
</dbReference>
<dbReference type="CDD" id="cd02196">
    <property type="entry name" value="PurM"/>
    <property type="match status" value="1"/>
</dbReference>
<dbReference type="FunFam" id="3.30.1330.10:FF:000001">
    <property type="entry name" value="Phosphoribosylformylglycinamidine cyclo-ligase"/>
    <property type="match status" value="1"/>
</dbReference>
<dbReference type="FunFam" id="3.90.650.10:FF:000001">
    <property type="entry name" value="Phosphoribosylformylglycinamidine cyclo-ligase"/>
    <property type="match status" value="1"/>
</dbReference>
<dbReference type="Gene3D" id="3.90.650.10">
    <property type="entry name" value="PurM-like C-terminal domain"/>
    <property type="match status" value="1"/>
</dbReference>
<dbReference type="Gene3D" id="3.30.1330.10">
    <property type="entry name" value="PurM-like, N-terminal domain"/>
    <property type="match status" value="1"/>
</dbReference>
<dbReference type="HAMAP" id="MF_00741">
    <property type="entry name" value="AIRS"/>
    <property type="match status" value="1"/>
</dbReference>
<dbReference type="InterPro" id="IPR010918">
    <property type="entry name" value="PurM-like_C_dom"/>
</dbReference>
<dbReference type="InterPro" id="IPR036676">
    <property type="entry name" value="PurM-like_C_sf"/>
</dbReference>
<dbReference type="InterPro" id="IPR016188">
    <property type="entry name" value="PurM-like_N"/>
</dbReference>
<dbReference type="InterPro" id="IPR036921">
    <property type="entry name" value="PurM-like_N_sf"/>
</dbReference>
<dbReference type="InterPro" id="IPR004733">
    <property type="entry name" value="PurM_cligase"/>
</dbReference>
<dbReference type="NCBIfam" id="TIGR00878">
    <property type="entry name" value="purM"/>
    <property type="match status" value="1"/>
</dbReference>
<dbReference type="PANTHER" id="PTHR10520:SF12">
    <property type="entry name" value="TRIFUNCTIONAL PURINE BIOSYNTHETIC PROTEIN ADENOSINE-3"/>
    <property type="match status" value="1"/>
</dbReference>
<dbReference type="PANTHER" id="PTHR10520">
    <property type="entry name" value="TRIFUNCTIONAL PURINE BIOSYNTHETIC PROTEIN ADENOSINE-3-RELATED"/>
    <property type="match status" value="1"/>
</dbReference>
<dbReference type="Pfam" id="PF00586">
    <property type="entry name" value="AIRS"/>
    <property type="match status" value="1"/>
</dbReference>
<dbReference type="Pfam" id="PF02769">
    <property type="entry name" value="AIRS_C"/>
    <property type="match status" value="1"/>
</dbReference>
<dbReference type="SUPFAM" id="SSF56042">
    <property type="entry name" value="PurM C-terminal domain-like"/>
    <property type="match status" value="1"/>
</dbReference>
<dbReference type="SUPFAM" id="SSF55326">
    <property type="entry name" value="PurM N-terminal domain-like"/>
    <property type="match status" value="1"/>
</dbReference>
<gene>
    <name evidence="1" type="primary">purM</name>
    <name type="ordered locus">Maqu_0946</name>
</gene>